<gene>
    <name evidence="3" type="primary">2-ODD</name>
    <name evidence="3" type="synonym">Phex30848</name>
</gene>
<organism>
    <name type="scientific">Sinopodophyllum hexandrum</name>
    <name type="common">Himalayan may apple</name>
    <name type="synonym">Podophyllum hexandrum</name>
    <dbReference type="NCBI Taxonomy" id="93608"/>
    <lineage>
        <taxon>Eukaryota</taxon>
        <taxon>Viridiplantae</taxon>
        <taxon>Streptophyta</taxon>
        <taxon>Embryophyta</taxon>
        <taxon>Tracheophyta</taxon>
        <taxon>Spermatophyta</taxon>
        <taxon>Magnoliopsida</taxon>
        <taxon>Ranunculales</taxon>
        <taxon>Berberidaceae</taxon>
        <taxon>Podophylloideae</taxon>
        <taxon>Podophylleae</taxon>
        <taxon>Sinopodophyllum</taxon>
    </lineage>
</organism>
<reference key="1">
    <citation type="journal article" date="2015" name="Science">
        <title>Six enzymes from mayapple that complete the biosynthetic pathway to the etoposide aglycone.</title>
        <authorList>
            <person name="Lau W."/>
            <person name="Sattely E.S."/>
        </authorList>
    </citation>
    <scope>NUCLEOTIDE SEQUENCE [MRNA]</scope>
    <scope>FUNCTION</scope>
    <scope>CATALYTIC ACTIVITY</scope>
    <scope>BIOTECHNOLOGY</scope>
    <scope>TISSUE SPECIFICITY</scope>
    <scope>INDUCTION BY WOUNDING</scope>
    <scope>PATHWAY</scope>
</reference>
<keyword id="KW-0002">3D-structure</keyword>
<keyword id="KW-0223">Dioxygenase</keyword>
<keyword id="KW-0408">Iron</keyword>
<keyword id="KW-0479">Metal-binding</keyword>
<keyword id="KW-0560">Oxidoreductase</keyword>
<sequence length="310" mass="35028">MGSTAPLRLPVIDLSMKNLKPGTTSWNSVRTQVREALEEYGCFEAVIDAVSPELQKAVCNKGHELLNLPLETKMLNGNKPEYDGFTSIPNLNEGMGVGRITDLEKVERFTNLMWPEGNKDFCETVYSYGKRMAEVDHILKMMVFESFGMEKHFDSFCESTNYLLHFMRYQQPGKDGRSPALSLHKDKSILTIVNQNDVKGLEFETKDGEWILPTADNHIVLLGDCFMAWSNGRLHSPLHRVTLVANQARLSTSSFSFPKDIIETPAELVDEEHPLLFNPFEITELLAYCFTKEGAKAVCDLKQYKAYTGA</sequence>
<feature type="chain" id="PRO_0000451906" description="Deoxypodophyllotoxin synthase">
    <location>
        <begin position="1"/>
        <end position="310"/>
    </location>
</feature>
<feature type="domain" description="Fe2OG dioxygenase" evidence="1">
    <location>
        <begin position="159"/>
        <end position="258"/>
    </location>
</feature>
<feature type="binding site" evidence="1">
    <location>
        <position position="184"/>
    </location>
    <ligand>
        <name>Fe cation</name>
        <dbReference type="ChEBI" id="CHEBI:24875"/>
    </ligand>
</feature>
<feature type="binding site" evidence="1">
    <location>
        <position position="186"/>
    </location>
    <ligand>
        <name>Fe cation</name>
        <dbReference type="ChEBI" id="CHEBI:24875"/>
    </ligand>
</feature>
<feature type="binding site" evidence="1">
    <location>
        <position position="239"/>
    </location>
    <ligand>
        <name>Fe cation</name>
        <dbReference type="ChEBI" id="CHEBI:24875"/>
    </ligand>
</feature>
<feature type="binding site" evidence="1">
    <location>
        <position position="249"/>
    </location>
    <ligand>
        <name>2-oxoglutarate</name>
        <dbReference type="ChEBI" id="CHEBI:16810"/>
    </ligand>
</feature>
<feature type="strand" evidence="7">
    <location>
        <begin position="11"/>
        <end position="13"/>
    </location>
</feature>
<feature type="helix" evidence="6">
    <location>
        <begin position="16"/>
        <end position="18"/>
    </location>
</feature>
<feature type="helix" evidence="7">
    <location>
        <begin position="24"/>
        <end position="39"/>
    </location>
</feature>
<feature type="strand" evidence="7">
    <location>
        <begin position="41"/>
        <end position="46"/>
    </location>
</feature>
<feature type="helix" evidence="7">
    <location>
        <begin position="52"/>
        <end position="66"/>
    </location>
</feature>
<feature type="helix" evidence="7">
    <location>
        <begin position="70"/>
        <end position="74"/>
    </location>
</feature>
<feature type="turn" evidence="7">
    <location>
        <begin position="80"/>
        <end position="83"/>
    </location>
</feature>
<feature type="strand" evidence="7">
    <location>
        <begin position="86"/>
        <end position="88"/>
    </location>
</feature>
<feature type="turn" evidence="7">
    <location>
        <begin position="89"/>
        <end position="91"/>
    </location>
</feature>
<feature type="strand" evidence="7">
    <location>
        <begin position="92"/>
        <end position="98"/>
    </location>
</feature>
<feature type="turn" evidence="7">
    <location>
        <begin position="99"/>
        <end position="101"/>
    </location>
</feature>
<feature type="helix" evidence="7">
    <location>
        <begin position="103"/>
        <end position="113"/>
    </location>
</feature>
<feature type="helix" evidence="7">
    <location>
        <begin position="119"/>
        <end position="146"/>
    </location>
</feature>
<feature type="helix" evidence="7">
    <location>
        <begin position="150"/>
        <end position="152"/>
    </location>
</feature>
<feature type="helix" evidence="7">
    <location>
        <begin position="153"/>
        <end position="157"/>
    </location>
</feature>
<feature type="strand" evidence="7">
    <location>
        <begin position="161"/>
        <end position="169"/>
    </location>
</feature>
<feature type="strand" evidence="7">
    <location>
        <begin position="173"/>
        <end position="176"/>
    </location>
</feature>
<feature type="strand" evidence="7">
    <location>
        <begin position="178"/>
        <end position="184"/>
    </location>
</feature>
<feature type="strand" evidence="7">
    <location>
        <begin position="188"/>
        <end position="194"/>
    </location>
</feature>
<feature type="strand" evidence="7">
    <location>
        <begin position="201"/>
        <end position="204"/>
    </location>
</feature>
<feature type="strand" evidence="7">
    <location>
        <begin position="206"/>
        <end position="208"/>
    </location>
</feature>
<feature type="strand" evidence="7">
    <location>
        <begin position="215"/>
        <end position="222"/>
    </location>
</feature>
<feature type="helix" evidence="7">
    <location>
        <begin position="224"/>
        <end position="229"/>
    </location>
</feature>
<feature type="turn" evidence="7">
    <location>
        <begin position="230"/>
        <end position="232"/>
    </location>
</feature>
<feature type="strand" evidence="7">
    <location>
        <begin position="239"/>
        <end position="243"/>
    </location>
</feature>
<feature type="strand" evidence="7">
    <location>
        <begin position="245"/>
        <end position="247"/>
    </location>
</feature>
<feature type="strand" evidence="7">
    <location>
        <begin position="249"/>
        <end position="257"/>
    </location>
</feature>
<feature type="strand" evidence="7">
    <location>
        <begin position="259"/>
        <end position="262"/>
    </location>
</feature>
<feature type="helix" evidence="7">
    <location>
        <begin position="266"/>
        <end position="268"/>
    </location>
</feature>
<feature type="strand" evidence="6">
    <location>
        <begin position="271"/>
        <end position="273"/>
    </location>
</feature>
<feature type="helix" evidence="7">
    <location>
        <begin position="282"/>
        <end position="289"/>
    </location>
</feature>
<feature type="turn" evidence="7">
    <location>
        <begin position="292"/>
        <end position="294"/>
    </location>
</feature>
<feature type="helix" evidence="7">
    <location>
        <begin position="295"/>
        <end position="297"/>
    </location>
</feature>
<feature type="helix" evidence="7">
    <location>
        <begin position="301"/>
        <end position="303"/>
    </location>
</feature>
<dbReference type="EC" id="1.14.20.8" evidence="2"/>
<dbReference type="EMBL" id="KT390173">
    <property type="protein sequence ID" value="ALG05135.1"/>
    <property type="molecule type" value="mRNA"/>
</dbReference>
<dbReference type="PDB" id="7E37">
    <property type="method" value="X-ray"/>
    <property type="resolution" value="2.09 A"/>
    <property type="chains" value="A/B=1-310"/>
</dbReference>
<dbReference type="PDB" id="7E38">
    <property type="method" value="X-ray"/>
    <property type="resolution" value="2.05 A"/>
    <property type="chains" value="A/B=1-310"/>
</dbReference>
<dbReference type="PDB" id="8CI9">
    <property type="method" value="X-ray"/>
    <property type="resolution" value="1.41 A"/>
    <property type="chains" value="C=1-310"/>
</dbReference>
<dbReference type="PDBsum" id="7E37"/>
<dbReference type="PDBsum" id="7E38"/>
<dbReference type="PDBsum" id="8CI9"/>
<dbReference type="SMR" id="A0A0N9HQ36"/>
<dbReference type="KEGG" id="ag:ALG05135"/>
<dbReference type="BRENDA" id="1.14.20.8">
    <property type="organism ID" value="4928"/>
</dbReference>
<dbReference type="UniPathway" id="UPA00711"/>
<dbReference type="GO" id="GO:0016706">
    <property type="term" value="F:2-oxoglutarate-dependent dioxygenase activity"/>
    <property type="evidence" value="ECO:0000314"/>
    <property type="project" value="UniProtKB"/>
</dbReference>
<dbReference type="GO" id="GO:0046872">
    <property type="term" value="F:metal ion binding"/>
    <property type="evidence" value="ECO:0007669"/>
    <property type="project" value="UniProtKB-KW"/>
</dbReference>
<dbReference type="GO" id="GO:0009699">
    <property type="term" value="P:phenylpropanoid biosynthetic process"/>
    <property type="evidence" value="ECO:0000314"/>
    <property type="project" value="UniProtKB"/>
</dbReference>
<dbReference type="GO" id="GO:0009611">
    <property type="term" value="P:response to wounding"/>
    <property type="evidence" value="ECO:0000270"/>
    <property type="project" value="UniProtKB"/>
</dbReference>
<dbReference type="Gene3D" id="2.60.120.330">
    <property type="entry name" value="B-lactam Antibiotic, Isopenicillin N Synthase, Chain"/>
    <property type="match status" value="1"/>
</dbReference>
<dbReference type="InterPro" id="IPR026992">
    <property type="entry name" value="DIOX_N"/>
</dbReference>
<dbReference type="InterPro" id="IPR044861">
    <property type="entry name" value="IPNS-like_FE2OG_OXY"/>
</dbReference>
<dbReference type="InterPro" id="IPR027443">
    <property type="entry name" value="IPNS-like_sf"/>
</dbReference>
<dbReference type="InterPro" id="IPR050231">
    <property type="entry name" value="Iron_ascorbate_oxido_reductase"/>
</dbReference>
<dbReference type="InterPro" id="IPR005123">
    <property type="entry name" value="Oxoglu/Fe-dep_dioxygenase_dom"/>
</dbReference>
<dbReference type="PANTHER" id="PTHR47990">
    <property type="entry name" value="2-OXOGLUTARATE (2OG) AND FE(II)-DEPENDENT OXYGENASE SUPERFAMILY PROTEIN-RELATED"/>
    <property type="match status" value="1"/>
</dbReference>
<dbReference type="Pfam" id="PF03171">
    <property type="entry name" value="2OG-FeII_Oxy"/>
    <property type="match status" value="1"/>
</dbReference>
<dbReference type="Pfam" id="PF14226">
    <property type="entry name" value="DIOX_N"/>
    <property type="match status" value="1"/>
</dbReference>
<dbReference type="SUPFAM" id="SSF51197">
    <property type="entry name" value="Clavaminate synthase-like"/>
    <property type="match status" value="1"/>
</dbReference>
<dbReference type="PROSITE" id="PS51471">
    <property type="entry name" value="FE2OG_OXY"/>
    <property type="match status" value="1"/>
</dbReference>
<comment type="function">
    <text evidence="2">2-oxoglutarate-dependent dioxygenase involved in the biosynthesis of etoposide, a chemotherapeutic compound of the topoisomerase inhibitor family (PubMed:26359402). Catalyzes the conversion of yatein to deoxypodophyllotoxin (PubMed:26359402). Can also use, to some extent, demethylyatein as substrate (PubMed:26359402).</text>
</comment>
<comment type="catalytic activity">
    <reaction evidence="2">
        <text>(-)-yatein + 2-oxoglutarate + O2 = (-)-deoxypodophyllotoxin + succinate + CO2 + H2O</text>
        <dbReference type="Rhea" id="RHEA:48744"/>
        <dbReference type="ChEBI" id="CHEBI:4429"/>
        <dbReference type="ChEBI" id="CHEBI:4553"/>
        <dbReference type="ChEBI" id="CHEBI:15377"/>
        <dbReference type="ChEBI" id="CHEBI:15379"/>
        <dbReference type="ChEBI" id="CHEBI:16526"/>
        <dbReference type="ChEBI" id="CHEBI:16810"/>
        <dbReference type="ChEBI" id="CHEBI:30031"/>
        <dbReference type="EC" id="1.14.20.8"/>
    </reaction>
    <physiologicalReaction direction="left-to-right" evidence="2">
        <dbReference type="Rhea" id="RHEA:48745"/>
    </physiologicalReaction>
</comment>
<comment type="cofactor">
    <cofactor evidence="1">
        <name>Fe(2+)</name>
        <dbReference type="ChEBI" id="CHEBI:29033"/>
    </cofactor>
    <text evidence="1">Binds 1 Fe(2+) ion per subunit.</text>
</comment>
<comment type="pathway">
    <text evidence="2">Aromatic compound metabolism; phenylpropanoid biosynthesis.</text>
</comment>
<comment type="tissue specificity">
    <text evidence="2">Mostly expressed in leaves and stems.</text>
</comment>
<comment type="induction">
    <text evidence="2">Transiently induced after wounding.</text>
</comment>
<comment type="biotechnology">
    <text evidence="5">Combinatorially expression of Sinopodophyllum hexandrum (mayapple) genes of the podophyllotoxin pathway (e.g. DIR, PLR, SDH, CYP719A23, OMT3, CYP71CU1, OMT1, 2-ODD, CYP71BE54 and CYP82D61) in Nicotiana benthamiana (tobacco) results in the production of the chemotherapeutic compound etoposide.</text>
</comment>
<comment type="similarity">
    <text evidence="4">Belongs to the iron/ascorbate-dependent oxidoreductase family.</text>
</comment>
<proteinExistence type="evidence at protein level"/>
<protein>
    <recommendedName>
        <fullName evidence="3">Deoxypodophyllotoxin synthase</fullName>
        <ecNumber evidence="2">1.14.20.8</ecNumber>
    </recommendedName>
    <alternativeName>
        <fullName evidence="3">2-oxoglutarate dependent dioxygenase</fullName>
    </alternativeName>
</protein>
<accession>A0A0N9HQ36</accession>
<evidence type="ECO:0000255" key="1">
    <source>
        <dbReference type="PROSITE-ProRule" id="PRU00805"/>
    </source>
</evidence>
<evidence type="ECO:0000269" key="2">
    <source>
    </source>
</evidence>
<evidence type="ECO:0000303" key="3">
    <source>
    </source>
</evidence>
<evidence type="ECO:0000305" key="4"/>
<evidence type="ECO:0000305" key="5">
    <source>
    </source>
</evidence>
<evidence type="ECO:0007829" key="6">
    <source>
        <dbReference type="PDB" id="7E38"/>
    </source>
</evidence>
<evidence type="ECO:0007829" key="7">
    <source>
        <dbReference type="PDB" id="8CI9"/>
    </source>
</evidence>
<name>2ODD_SINHE</name>